<evidence type="ECO:0000255" key="1">
    <source>
        <dbReference type="HAMAP-Rule" id="MF_00081"/>
    </source>
</evidence>
<protein>
    <recommendedName>
        <fullName evidence="1">Heat-inducible transcription repressor HrcA</fullName>
    </recommendedName>
</protein>
<gene>
    <name evidence="1" type="primary">hrcA</name>
    <name type="ordered locus">GK2506</name>
</gene>
<sequence>MLTDRQLLILQVIIDDFIRSGQPVGSRTLSKKHQIAFSSATIRNEMADLEELGYIEKTHISSGRVPSEKGYRYYVDHLLPPQRLTRADIQKIRSVFAERIYELEKLMQKSAQILSELTNYTSIALGPTFKESKLKQMQIVPLNEQTAVAIVVTDTGHVENRVVTIPSSMDAGDLEKMVNIFNERLNGVPLIDLKEKMETEVADVLRRHIRNYDSVLNTLIETLDAPEEEKVFFAGKANMLNQPEFSDIQKVRPLLDIIEQEKDIYRLLRKQTQKGVRVSIGHENELRGMENCSLITATYSVGDEPLGAIAILGPTRMEYSRVITVLNRVASDLSAALAKWYQSQ</sequence>
<organism>
    <name type="scientific">Geobacillus kaustophilus (strain HTA426)</name>
    <dbReference type="NCBI Taxonomy" id="235909"/>
    <lineage>
        <taxon>Bacteria</taxon>
        <taxon>Bacillati</taxon>
        <taxon>Bacillota</taxon>
        <taxon>Bacilli</taxon>
        <taxon>Bacillales</taxon>
        <taxon>Anoxybacillaceae</taxon>
        <taxon>Geobacillus</taxon>
        <taxon>Geobacillus thermoleovorans group</taxon>
    </lineage>
</organism>
<comment type="function">
    <text evidence="1">Negative regulator of class I heat shock genes (grpE-dnaK-dnaJ and groELS operons). Prevents heat-shock induction of these operons.</text>
</comment>
<comment type="similarity">
    <text evidence="1">Belongs to the HrcA family.</text>
</comment>
<keyword id="KW-1185">Reference proteome</keyword>
<keyword id="KW-0678">Repressor</keyword>
<keyword id="KW-0346">Stress response</keyword>
<keyword id="KW-0804">Transcription</keyword>
<keyword id="KW-0805">Transcription regulation</keyword>
<proteinExistence type="inferred from homology"/>
<reference key="1">
    <citation type="journal article" date="2004" name="Nucleic Acids Res.">
        <title>Thermoadaptation trait revealed by the genome sequence of thermophilic Geobacillus kaustophilus.</title>
        <authorList>
            <person name="Takami H."/>
            <person name="Takaki Y."/>
            <person name="Chee G.-J."/>
            <person name="Nishi S."/>
            <person name="Shimamura S."/>
            <person name="Suzuki H."/>
            <person name="Matsui S."/>
            <person name="Uchiyama I."/>
        </authorList>
    </citation>
    <scope>NUCLEOTIDE SEQUENCE [LARGE SCALE GENOMIC DNA]</scope>
    <source>
        <strain>HTA426</strain>
    </source>
</reference>
<name>HRCA_GEOKA</name>
<dbReference type="EMBL" id="BA000043">
    <property type="protein sequence ID" value="BAD76791.1"/>
    <property type="molecule type" value="Genomic_DNA"/>
</dbReference>
<dbReference type="RefSeq" id="WP_011231985.1">
    <property type="nucleotide sequence ID" value="NC_006510.1"/>
</dbReference>
<dbReference type="SMR" id="Q5KWZ5"/>
<dbReference type="STRING" id="235909.GK2506"/>
<dbReference type="KEGG" id="gka:GK2506"/>
<dbReference type="PATRIC" id="fig|235909.7.peg.2683"/>
<dbReference type="eggNOG" id="COG1420">
    <property type="taxonomic scope" value="Bacteria"/>
</dbReference>
<dbReference type="HOGENOM" id="CLU_050019_1_0_9"/>
<dbReference type="Proteomes" id="UP000001172">
    <property type="component" value="Chromosome"/>
</dbReference>
<dbReference type="GO" id="GO:0003677">
    <property type="term" value="F:DNA binding"/>
    <property type="evidence" value="ECO:0007669"/>
    <property type="project" value="InterPro"/>
</dbReference>
<dbReference type="GO" id="GO:0045892">
    <property type="term" value="P:negative regulation of DNA-templated transcription"/>
    <property type="evidence" value="ECO:0007669"/>
    <property type="project" value="UniProtKB-UniRule"/>
</dbReference>
<dbReference type="FunFam" id="1.10.10.10:FF:000049">
    <property type="entry name" value="Heat-inducible transcription repressor HrcA"/>
    <property type="match status" value="1"/>
</dbReference>
<dbReference type="Gene3D" id="3.30.450.40">
    <property type="match status" value="1"/>
</dbReference>
<dbReference type="Gene3D" id="3.30.390.60">
    <property type="entry name" value="Heat-inducible transcription repressor hrca homolog, domain 3"/>
    <property type="match status" value="1"/>
</dbReference>
<dbReference type="Gene3D" id="1.10.10.10">
    <property type="entry name" value="Winged helix-like DNA-binding domain superfamily/Winged helix DNA-binding domain"/>
    <property type="match status" value="1"/>
</dbReference>
<dbReference type="HAMAP" id="MF_00081">
    <property type="entry name" value="HrcA"/>
    <property type="match status" value="1"/>
</dbReference>
<dbReference type="InterPro" id="IPR029016">
    <property type="entry name" value="GAF-like_dom_sf"/>
</dbReference>
<dbReference type="InterPro" id="IPR002571">
    <property type="entry name" value="HrcA"/>
</dbReference>
<dbReference type="InterPro" id="IPR021153">
    <property type="entry name" value="HrcA_C"/>
</dbReference>
<dbReference type="InterPro" id="IPR036388">
    <property type="entry name" value="WH-like_DNA-bd_sf"/>
</dbReference>
<dbReference type="InterPro" id="IPR036390">
    <property type="entry name" value="WH_DNA-bd_sf"/>
</dbReference>
<dbReference type="InterPro" id="IPR023120">
    <property type="entry name" value="WHTH_transcript_rep_HrcA_IDD"/>
</dbReference>
<dbReference type="NCBIfam" id="TIGR00331">
    <property type="entry name" value="hrcA"/>
    <property type="match status" value="1"/>
</dbReference>
<dbReference type="PANTHER" id="PTHR34824">
    <property type="entry name" value="HEAT-INDUCIBLE TRANSCRIPTION REPRESSOR HRCA"/>
    <property type="match status" value="1"/>
</dbReference>
<dbReference type="PANTHER" id="PTHR34824:SF1">
    <property type="entry name" value="HEAT-INDUCIBLE TRANSCRIPTION REPRESSOR HRCA"/>
    <property type="match status" value="1"/>
</dbReference>
<dbReference type="Pfam" id="PF01628">
    <property type="entry name" value="HrcA"/>
    <property type="match status" value="1"/>
</dbReference>
<dbReference type="PIRSF" id="PIRSF005485">
    <property type="entry name" value="HrcA"/>
    <property type="match status" value="1"/>
</dbReference>
<dbReference type="SUPFAM" id="SSF55781">
    <property type="entry name" value="GAF domain-like"/>
    <property type="match status" value="1"/>
</dbReference>
<dbReference type="SUPFAM" id="SSF46785">
    <property type="entry name" value="Winged helix' DNA-binding domain"/>
    <property type="match status" value="1"/>
</dbReference>
<accession>Q5KWZ5</accession>
<feature type="chain" id="PRO_0000182480" description="Heat-inducible transcription repressor HrcA">
    <location>
        <begin position="1"/>
        <end position="344"/>
    </location>
</feature>